<name>RDRP_RBDVR</name>
<reference key="1">
    <citation type="journal article" date="1992" name="J. Gen. Virol.">
        <title>The nucleotide sequence of RNA-1 of raspberry bushy dwarf virus.</title>
        <authorList>
            <person name="Ziegler A."/>
            <person name="Natsuaki T."/>
            <person name="Mayo M.A."/>
            <person name="Jolly C.A."/>
            <person name="Murant A.F."/>
        </authorList>
    </citation>
    <scope>NUCLEOTIDE SEQUENCE [GENOMIC RNA]</scope>
</reference>
<evidence type="ECO:0000255" key="1">
    <source>
        <dbReference type="PROSITE-ProRule" id="PRU00539"/>
    </source>
</evidence>
<evidence type="ECO:0000255" key="2">
    <source>
        <dbReference type="PROSITE-ProRule" id="PRU01079"/>
    </source>
</evidence>
<evidence type="ECO:0000305" key="3"/>
<organismHost>
    <name type="scientific">Rubus idaeus</name>
    <name type="common">Raspberry</name>
    <dbReference type="NCBI Taxonomy" id="32247"/>
</organismHost>
<organismHost>
    <name type="scientific">Rubus occidentalis</name>
    <name type="common">Black raspberry</name>
    <dbReference type="NCBI Taxonomy" id="75079"/>
</organismHost>
<organismHost>
    <name type="scientific">Rubus ursinus</name>
    <name type="common">California blackberry</name>
    <dbReference type="NCBI Taxonomy" id="75100"/>
</organismHost>
<protein>
    <recommendedName>
        <fullName>Methyltransferase/helicase/RNA-directed RNA polymerase</fullName>
        <ecNumber>2.1.1.-</ecNumber>
        <ecNumber>2.7.7.48</ecNumber>
        <ecNumber>3.6.4.13</ecNumber>
    </recommendedName>
</protein>
<proteinExistence type="inferred from homology"/>
<dbReference type="EC" id="2.1.1.-"/>
<dbReference type="EC" id="2.7.7.48"/>
<dbReference type="EC" id="3.6.4.13"/>
<dbReference type="EMBL" id="S51557">
    <property type="protein sequence ID" value="AAB24599.1"/>
    <property type="molecule type" value="Genomic_RNA"/>
</dbReference>
<dbReference type="PIR" id="JQ1896">
    <property type="entry name" value="JQ1896"/>
</dbReference>
<dbReference type="RefSeq" id="NP_620465.1">
    <property type="nucleotide sequence ID" value="NC_003739.1"/>
</dbReference>
<dbReference type="SMR" id="Q05983"/>
<dbReference type="GeneID" id="963857"/>
<dbReference type="KEGG" id="vg:963857"/>
<dbReference type="Proteomes" id="UP000001102">
    <property type="component" value="Genome"/>
</dbReference>
<dbReference type="GO" id="GO:0005524">
    <property type="term" value="F:ATP binding"/>
    <property type="evidence" value="ECO:0007669"/>
    <property type="project" value="UniProtKB-KW"/>
</dbReference>
<dbReference type="GO" id="GO:0016887">
    <property type="term" value="F:ATP hydrolysis activity"/>
    <property type="evidence" value="ECO:0007669"/>
    <property type="project" value="RHEA"/>
</dbReference>
<dbReference type="GO" id="GO:0008174">
    <property type="term" value="F:mRNA methyltransferase activity"/>
    <property type="evidence" value="ECO:0007669"/>
    <property type="project" value="InterPro"/>
</dbReference>
<dbReference type="GO" id="GO:0003723">
    <property type="term" value="F:RNA binding"/>
    <property type="evidence" value="ECO:0007669"/>
    <property type="project" value="InterPro"/>
</dbReference>
<dbReference type="GO" id="GO:0003724">
    <property type="term" value="F:RNA helicase activity"/>
    <property type="evidence" value="ECO:0007669"/>
    <property type="project" value="UniProtKB-EC"/>
</dbReference>
<dbReference type="GO" id="GO:0003968">
    <property type="term" value="F:RNA-directed RNA polymerase activity"/>
    <property type="evidence" value="ECO:0007669"/>
    <property type="project" value="UniProtKB-KW"/>
</dbReference>
<dbReference type="GO" id="GO:0006351">
    <property type="term" value="P:DNA-templated transcription"/>
    <property type="evidence" value="ECO:0007669"/>
    <property type="project" value="InterPro"/>
</dbReference>
<dbReference type="GO" id="GO:0016556">
    <property type="term" value="P:mRNA modification"/>
    <property type="evidence" value="ECO:0007669"/>
    <property type="project" value="InterPro"/>
</dbReference>
<dbReference type="GO" id="GO:0006396">
    <property type="term" value="P:RNA processing"/>
    <property type="evidence" value="ECO:0007669"/>
    <property type="project" value="InterPro"/>
</dbReference>
<dbReference type="GO" id="GO:0039694">
    <property type="term" value="P:viral RNA genome replication"/>
    <property type="evidence" value="ECO:0007669"/>
    <property type="project" value="InterPro"/>
</dbReference>
<dbReference type="CDD" id="cd23256">
    <property type="entry name" value="Mayoviridae_RdRp"/>
    <property type="match status" value="1"/>
</dbReference>
<dbReference type="Gene3D" id="3.40.50.300">
    <property type="entry name" value="P-loop containing nucleotide triphosphate hydrolases"/>
    <property type="match status" value="2"/>
</dbReference>
<dbReference type="InterPro" id="IPR027351">
    <property type="entry name" value="(+)RNA_virus_helicase_core_dom"/>
</dbReference>
<dbReference type="InterPro" id="IPR002588">
    <property type="entry name" value="Alphavirus-like_MT_dom"/>
</dbReference>
<dbReference type="InterPro" id="IPR043502">
    <property type="entry name" value="DNA/RNA_pol_sf"/>
</dbReference>
<dbReference type="InterPro" id="IPR027417">
    <property type="entry name" value="P-loop_NTPase"/>
</dbReference>
<dbReference type="InterPro" id="IPR001788">
    <property type="entry name" value="RNA-dep_RNA_pol_alsuvir"/>
</dbReference>
<dbReference type="InterPro" id="IPR007094">
    <property type="entry name" value="RNA-dir_pol_PSvirus"/>
</dbReference>
<dbReference type="Pfam" id="PF00978">
    <property type="entry name" value="RdRP_2"/>
    <property type="match status" value="1"/>
</dbReference>
<dbReference type="Pfam" id="PF01443">
    <property type="entry name" value="Viral_helicase1"/>
    <property type="match status" value="1"/>
</dbReference>
<dbReference type="Pfam" id="PF01660">
    <property type="entry name" value="Vmethyltransf"/>
    <property type="match status" value="1"/>
</dbReference>
<dbReference type="SUPFAM" id="SSF56672">
    <property type="entry name" value="DNA/RNA polymerases"/>
    <property type="match status" value="1"/>
</dbReference>
<dbReference type="SUPFAM" id="SSF52540">
    <property type="entry name" value="P-loop containing nucleoside triphosphate hydrolases"/>
    <property type="match status" value="1"/>
</dbReference>
<dbReference type="PROSITE" id="PS51743">
    <property type="entry name" value="ALPHAVIRUS_MT"/>
    <property type="match status" value="1"/>
</dbReference>
<dbReference type="PROSITE" id="PS51657">
    <property type="entry name" value="PSRV_HELICASE"/>
    <property type="match status" value="1"/>
</dbReference>
<dbReference type="PROSITE" id="PS50507">
    <property type="entry name" value="RDRP_SSRNA_POS"/>
    <property type="match status" value="1"/>
</dbReference>
<feature type="chain" id="PRO_0000402473" description="Methyltransferase/helicase/RNA-directed RNA polymerase">
    <location>
        <begin position="1"/>
        <end position="1694"/>
    </location>
</feature>
<feature type="domain" description="Alphavirus-like MT" evidence="2">
    <location>
        <begin position="194"/>
        <end position="444"/>
    </location>
</feature>
<feature type="domain" description="(+)RNA virus helicase ATP-binding">
    <location>
        <begin position="829"/>
        <end position="983"/>
    </location>
</feature>
<feature type="domain" description="(+)RNA virus helicase C-terminal">
    <location>
        <begin position="984"/>
        <end position="1145"/>
    </location>
</feature>
<feature type="domain" description="RdRp catalytic" evidence="1">
    <location>
        <begin position="1442"/>
        <end position="1558"/>
    </location>
</feature>
<sequence length="1694" mass="191100">MECLDFSKLWFSTAAGLQQRCYYDCVAWECLGDDDLQIFISGLNRLIESVAVSCTGDEDLDFVVDSCNEFVTGRDLKSFFAADLPVREVSSVGCISHFIPGSVSGLNVSDLLDNQLYGCSVFSSDFESKLRDIRDAALSDAASGVSQLVSCHFEKDVRHLLAENANSVKIPVPQKLSDDDMRILRDHFPRYELKFTQNVDGPHNMAAAHRLLETHDLLSNFPADAPILDIGGNWFSHFRYGRSNVHSCCPMLDLRDNERHTHRLTMTESLMSSLRHRYAGTIDLDPDAHLSRKVSDSMKEFYKRWAVHPKDLIRLYAGIRDGNSSLYCHHKFGVSWNDVLWESERNNCLTVPEPECPFKAKYAIMVHSGYDLPLKELIGGMVQHGVVELHGTMIADPAMLVATSGYIPALRCNWEKSKGQIWFSFRDDSTMGYRHDWEVYSKYLTSTVVSCGKHFYVMERDKYRHGVLFYSIIKCSGSLRKGDHTFFHNAWFHEMYDKYIMKVPLVKVKDLTGDEGSVECSWREVVMSRKLVDRVIEVCLRGVKPINFGNCDDAVHMDNLRIIQNHLLSHSQTLVLNGSTIIREEAIPFKDFSPVSVTIYFEILLTRYKESLSLAWFHAGLGPDFKLGSWVSSLKRVFYRILGFPANLLKYVLNALFRCRDKVSDMEFVKPAVEKLTVLENTYIGKSLMGDCPTLKEYDDSAFFNILENVGNELFNNSSTDSGKPETPEVTMTGNPNAVIAEAISYCRAEVDRIGKKCERILHAYQATGNCGGYLNDTDNVGVFDKMTSWVQKPKEFDHEFGWDGSSFIKLSWFGKIPDFVGRYLVVTDGTRVTTNLKFSRQYATIPATVTPTIKLVDGVTGCGKTTEIVRRYRPGILILSVCKANVDEIRRKLAAVDSKFIRTVDSYLLSPSVTGSCDELFIDEYGLSHPGILLLAIHISGIRKVTLFGDSEQIPFCNRLADFPLKYNSVEDVGLNFDREIRSTTYRCPQDITLSLQKMYKTKPIKTVSTVESSITIKPIKSEFEIPLPNAFDGPVLYICMTKHDESLLKLRWAKENISSEVRTVHAAQGLSYKNVVYFRLTRTDNDLYTKRKLPYHLVAISRHTDKIVYCTTKPEDSSDFSLSALKNTIKTSRDLTQEASGSESSYAVVFESNSEVTATKPEVCENVRKAAEMNFPVSSDALYQKEVPIYGAIPDPKGKASYNPGSVIRAIEELTPGNTSIDTDALDELVEVGPMSLQVGSIRWDVSKISPRLFTNNKFAVPHLPTGALLRRNTSSRQVGLAIEKRNANVMNSQKYFDLENLANKAVERFFDFFIDMEKFSKLPTGVLGSSAEQIQTYQNKTGNKVTDPVCVALSPIQKYKHMIKRDVKFNLTDGAQSEYTKAATITYHQPEITQVATAIFGQFKTRLLACRNKFLNIPLEHDNDLSGYLTKYHLGSENNTFTEIDFSKFDKSQGEIHQLIQDLILIKFGCDPEFVALWSTAHRSSSIFDQNVGIGFKTDFQRRTGDAFTFLGNSLVTAAMLAFVISDPDREKIRYMLVGGDDSLICSYGPIQVPLEPLGDIFNMSCKLVQPACPYFASRYLIRRGDEILCVPDPYKLLVKLGRKDVPDNQASLCEIRTGLADSAKYIFDDIVKQKLAILVQVRYNKAAPSLYDALCTVHWALSSNTNFSKFYTVTNTSNEVRRNRRGVKIT</sequence>
<accession>Q05983</accession>
<keyword id="KW-0067">ATP-binding</keyword>
<keyword id="KW-0378">Hydrolase</keyword>
<keyword id="KW-0547">Nucleotide-binding</keyword>
<keyword id="KW-0548">Nucleotidyltransferase</keyword>
<keyword id="KW-1185">Reference proteome</keyword>
<keyword id="KW-0696">RNA-directed RNA polymerase</keyword>
<keyword id="KW-0808">Transferase</keyword>
<keyword id="KW-0693">Viral RNA replication</keyword>
<comment type="function">
    <text evidence="3">RNA-dependent RNA polymerase replicates the viral genome.</text>
</comment>
<comment type="catalytic activity">
    <reaction>
        <text>ATP + H2O = ADP + phosphate + H(+)</text>
        <dbReference type="Rhea" id="RHEA:13065"/>
        <dbReference type="ChEBI" id="CHEBI:15377"/>
        <dbReference type="ChEBI" id="CHEBI:15378"/>
        <dbReference type="ChEBI" id="CHEBI:30616"/>
        <dbReference type="ChEBI" id="CHEBI:43474"/>
        <dbReference type="ChEBI" id="CHEBI:456216"/>
        <dbReference type="EC" id="3.6.4.13"/>
    </reaction>
</comment>
<comment type="catalytic activity">
    <reaction evidence="1">
        <text>RNA(n) + a ribonucleoside 5'-triphosphate = RNA(n+1) + diphosphate</text>
        <dbReference type="Rhea" id="RHEA:21248"/>
        <dbReference type="Rhea" id="RHEA-COMP:14527"/>
        <dbReference type="Rhea" id="RHEA-COMP:17342"/>
        <dbReference type="ChEBI" id="CHEBI:33019"/>
        <dbReference type="ChEBI" id="CHEBI:61557"/>
        <dbReference type="ChEBI" id="CHEBI:140395"/>
        <dbReference type="EC" id="2.7.7.48"/>
    </reaction>
</comment>
<comment type="similarity">
    <text evidence="3">Belongs to the ssRNA positive-strand viruses RNA-directed RNA polymerase family.</text>
</comment>
<organism>
    <name type="scientific">Raspberry bushy dwarf virus (isolate Malling Jewel raspberry/R15)</name>
    <name type="common">RBDV</name>
    <dbReference type="NCBI Taxonomy" id="652675"/>
    <lineage>
        <taxon>Viruses</taxon>
        <taxon>Riboviria</taxon>
        <taxon>Orthornavirae</taxon>
        <taxon>Kitrinoviricota</taxon>
        <taxon>Alsuviricetes</taxon>
        <taxon>Martellivirales</taxon>
        <taxon>Mayoviridae</taxon>
        <taxon>Idaeovirus</taxon>
        <taxon>Idaeovirus rubi</taxon>
    </lineage>
</organism>